<feature type="chain" id="PRO_0000087088" description="Ethanolamine utilization protein EutJ">
    <location>
        <begin position="1"/>
        <end position="278"/>
    </location>
</feature>
<accession>P77277</accession>
<name>EUTJ_ECOLI</name>
<keyword id="KW-0143">Chaperone</keyword>
<keyword id="KW-1185">Reference proteome</keyword>
<proteinExistence type="inferred from homology"/>
<evidence type="ECO:0000250" key="1">
    <source>
        <dbReference type="UniProtKB" id="P0A206"/>
    </source>
</evidence>
<evidence type="ECO:0000305" key="2"/>
<evidence type="ECO:0000305" key="3">
    <source>
    </source>
</evidence>
<organism>
    <name type="scientific">Escherichia coli (strain K12)</name>
    <dbReference type="NCBI Taxonomy" id="83333"/>
    <lineage>
        <taxon>Bacteria</taxon>
        <taxon>Pseudomonadati</taxon>
        <taxon>Pseudomonadota</taxon>
        <taxon>Gammaproteobacteria</taxon>
        <taxon>Enterobacterales</taxon>
        <taxon>Enterobacteriaceae</taxon>
        <taxon>Escherichia</taxon>
    </lineage>
</organism>
<sequence>MAHDEQWLTPRLQTAATLCNQTPAATESPLWLGVDLGTCDVVSMVVDRDGQPVAVCLDWADVVRDGIVWDFFGAVTIVRRHLDTLEQQFGRRFSHAATSFPPGTDPRISINVLESAGLEVSHVLDEPTAVADLLQLDNAGVVDIGGGTTGIAIVKKGKVTYSADEATGGHHISLTLAGNRRISLEEAEQYKRGHGEEIWPAVKPVYEKMADIVARHIEGQGITDLWLAGGSCMQPGVAELFRKQFPALQVHLPQHSLFMTPLAIASSGREKAEGLYAK</sequence>
<gene>
    <name type="primary">eutJ</name>
    <name type="synonym">yffW</name>
    <name type="ordered locus">b2454</name>
    <name type="ordered locus">JW2438</name>
</gene>
<protein>
    <recommendedName>
        <fullName>Ethanolamine utilization protein EutJ</fullName>
    </recommendedName>
</protein>
<comment type="function">
    <text evidence="1">May protect ethanolamine ammonia-lyase (EAL, eutB-eutC) from inhibition, may function in assembling the bacterial microcompartment and/or in refolding EAL, suggesting it may have chaperone activity.</text>
</comment>
<comment type="pathway">
    <text>Amine and polyamine degradation; ethanolamine degradation.</text>
</comment>
<comment type="similarity">
    <text evidence="2">Belongs to the EutJ family.</text>
</comment>
<comment type="caution">
    <text evidence="3">In strain MG1655 the eut operon is interrupted by the CPZ-55 prophage, encoding 9 genes situated between eutA and eutB, which are translated in the other direction. CPZ-55 may prevent expression of the eut operon in strain MG1655. Strain W3110 does not have this prophage element and should be able to express the operon.</text>
</comment>
<dbReference type="EMBL" id="U00096">
    <property type="protein sequence ID" value="AAC75507.1"/>
    <property type="molecule type" value="Genomic_DNA"/>
</dbReference>
<dbReference type="EMBL" id="AP009048">
    <property type="protein sequence ID" value="BAA16332.1"/>
    <property type="molecule type" value="Genomic_DNA"/>
</dbReference>
<dbReference type="PIR" id="E65020">
    <property type="entry name" value="E65020"/>
</dbReference>
<dbReference type="RefSeq" id="NP_416949.1">
    <property type="nucleotide sequence ID" value="NC_000913.3"/>
</dbReference>
<dbReference type="RefSeq" id="WP_000929729.1">
    <property type="nucleotide sequence ID" value="NZ_LN832404.1"/>
</dbReference>
<dbReference type="SMR" id="P77277"/>
<dbReference type="BioGRID" id="4261334">
    <property type="interactions" value="12"/>
</dbReference>
<dbReference type="FunCoup" id="P77277">
    <property type="interactions" value="154"/>
</dbReference>
<dbReference type="IntAct" id="P77277">
    <property type="interactions" value="5"/>
</dbReference>
<dbReference type="STRING" id="511145.b2454"/>
<dbReference type="PaxDb" id="511145-b2454"/>
<dbReference type="EnsemblBacteria" id="AAC75507">
    <property type="protein sequence ID" value="AAC75507"/>
    <property type="gene ID" value="b2454"/>
</dbReference>
<dbReference type="GeneID" id="947588"/>
<dbReference type="KEGG" id="ecj:JW2438"/>
<dbReference type="KEGG" id="eco:b2454"/>
<dbReference type="KEGG" id="ecoc:C3026_13620"/>
<dbReference type="PATRIC" id="fig|1411691.4.peg.4286"/>
<dbReference type="EchoBASE" id="EB3936"/>
<dbReference type="eggNOG" id="COG4820">
    <property type="taxonomic scope" value="Bacteria"/>
</dbReference>
<dbReference type="HOGENOM" id="CLU_088869_0_0_6"/>
<dbReference type="InParanoid" id="P77277"/>
<dbReference type="OMA" id="KPQNPMF"/>
<dbReference type="OrthoDB" id="306538at2"/>
<dbReference type="PhylomeDB" id="P77277"/>
<dbReference type="BioCyc" id="EcoCyc:G7284-MONOMER"/>
<dbReference type="UniPathway" id="UPA00560"/>
<dbReference type="PRO" id="PR:P77277"/>
<dbReference type="Proteomes" id="UP000000625">
    <property type="component" value="Chromosome"/>
</dbReference>
<dbReference type="GO" id="GO:0046336">
    <property type="term" value="P:ethanolamine catabolic process"/>
    <property type="evidence" value="ECO:0007669"/>
    <property type="project" value="UniProtKB-UniPathway"/>
</dbReference>
<dbReference type="CDD" id="cd24047">
    <property type="entry name" value="ASKHA_NBD_EutJ"/>
    <property type="match status" value="1"/>
</dbReference>
<dbReference type="Gene3D" id="3.30.420.40">
    <property type="match status" value="2"/>
</dbReference>
<dbReference type="InterPro" id="IPR043129">
    <property type="entry name" value="ATPase_NBD"/>
</dbReference>
<dbReference type="InterPro" id="IPR013366">
    <property type="entry name" value="EutJ"/>
</dbReference>
<dbReference type="InterPro" id="IPR050696">
    <property type="entry name" value="FtsA/MreB"/>
</dbReference>
<dbReference type="NCBIfam" id="TIGR02529">
    <property type="entry name" value="EutJ"/>
    <property type="match status" value="1"/>
</dbReference>
<dbReference type="NCBIfam" id="NF011660">
    <property type="entry name" value="PRK15080.1"/>
    <property type="match status" value="1"/>
</dbReference>
<dbReference type="PANTHER" id="PTHR32432">
    <property type="entry name" value="CELL DIVISION PROTEIN FTSA-RELATED"/>
    <property type="match status" value="1"/>
</dbReference>
<dbReference type="PANTHER" id="PTHR32432:SF3">
    <property type="entry name" value="ETHANOLAMINE UTILIZATION PROTEIN EUTJ"/>
    <property type="match status" value="1"/>
</dbReference>
<dbReference type="Pfam" id="PF14450">
    <property type="entry name" value="FtsA"/>
    <property type="match status" value="1"/>
</dbReference>
<dbReference type="SUPFAM" id="SSF53067">
    <property type="entry name" value="Actin-like ATPase domain"/>
    <property type="match status" value="2"/>
</dbReference>
<reference key="1">
    <citation type="journal article" date="1997" name="DNA Res.">
        <title>Construction of a contiguous 874-kb sequence of the Escherichia coli-K12 genome corresponding to 50.0-68.8 min on the linkage map and analysis of its sequence features.</title>
        <authorList>
            <person name="Yamamoto Y."/>
            <person name="Aiba H."/>
            <person name="Baba T."/>
            <person name="Hayashi K."/>
            <person name="Inada T."/>
            <person name="Isono K."/>
            <person name="Itoh T."/>
            <person name="Kimura S."/>
            <person name="Kitagawa M."/>
            <person name="Makino K."/>
            <person name="Miki T."/>
            <person name="Mitsuhashi N."/>
            <person name="Mizobuchi K."/>
            <person name="Mori H."/>
            <person name="Nakade S."/>
            <person name="Nakamura Y."/>
            <person name="Nashimoto H."/>
            <person name="Oshima T."/>
            <person name="Oyama S."/>
            <person name="Saito N."/>
            <person name="Sampei G."/>
            <person name="Satoh Y."/>
            <person name="Sivasundaram S."/>
            <person name="Tagami H."/>
            <person name="Takahashi H."/>
            <person name="Takeda J."/>
            <person name="Takemoto K."/>
            <person name="Uehara K."/>
            <person name="Wada C."/>
            <person name="Yamagata S."/>
            <person name="Horiuchi T."/>
        </authorList>
    </citation>
    <scope>NUCLEOTIDE SEQUENCE [LARGE SCALE GENOMIC DNA]</scope>
    <source>
        <strain>K12 / W3110 / ATCC 27325 / DSM 5911</strain>
    </source>
</reference>
<reference key="2">
    <citation type="journal article" date="1997" name="Science">
        <title>The complete genome sequence of Escherichia coli K-12.</title>
        <authorList>
            <person name="Blattner F.R."/>
            <person name="Plunkett G. III"/>
            <person name="Bloch C.A."/>
            <person name="Perna N.T."/>
            <person name="Burland V."/>
            <person name="Riley M."/>
            <person name="Collado-Vides J."/>
            <person name="Glasner J.D."/>
            <person name="Rode C.K."/>
            <person name="Mayhew G.F."/>
            <person name="Gregor J."/>
            <person name="Davis N.W."/>
            <person name="Kirkpatrick H.A."/>
            <person name="Goeden M.A."/>
            <person name="Rose D.J."/>
            <person name="Mau B."/>
            <person name="Shao Y."/>
        </authorList>
    </citation>
    <scope>NUCLEOTIDE SEQUENCE [LARGE SCALE GENOMIC DNA]</scope>
    <source>
        <strain>K12 / MG1655 / ATCC 47076</strain>
    </source>
</reference>
<reference key="3">
    <citation type="journal article" date="2006" name="Mol. Syst. Biol.">
        <title>Highly accurate genome sequences of Escherichia coli K-12 strains MG1655 and W3110.</title>
        <authorList>
            <person name="Hayashi K."/>
            <person name="Morooka N."/>
            <person name="Yamamoto Y."/>
            <person name="Fujita K."/>
            <person name="Isono K."/>
            <person name="Choi S."/>
            <person name="Ohtsubo E."/>
            <person name="Baba T."/>
            <person name="Wanner B.L."/>
            <person name="Mori H."/>
            <person name="Horiuchi T."/>
        </authorList>
    </citation>
    <scope>NUCLEOTIDE SEQUENCE [LARGE SCALE GENOMIC DNA]</scope>
    <source>
        <strain>K12 / W3110 / ATCC 27325 / DSM 5911</strain>
    </source>
</reference>